<reference key="1">
    <citation type="journal article" date="1991" name="Biochemistry">
        <title>Structure and expression of the bovine amelogenin gene.</title>
        <authorList>
            <person name="Gibson C."/>
            <person name="Golub E."/>
            <person name="Herold R."/>
            <person name="Risser M."/>
            <person name="Ding W."/>
            <person name="Shimokawa H."/>
            <person name="Young M."/>
            <person name="Termine J."/>
            <person name="Rosenbloom J."/>
        </authorList>
    </citation>
    <scope>NUCLEOTIDE SEQUENCE [MRNA]</scope>
    <scope>DEVELOPMENTAL STAGE</scope>
</reference>
<reference key="2">
    <citation type="journal article" date="1984" name="Biochem. Biophys. Res. Commun.">
        <title>Complete amino acid sequence of amelogenin in developing bovine enamel.</title>
        <authorList>
            <person name="Takagi T."/>
            <person name="Suzuki M."/>
            <person name="Baba T."/>
            <person name="Minegishi K."/>
            <person name="Sasaki S."/>
        </authorList>
    </citation>
    <scope>PRELIMINARY PROTEIN SEQUENCE OF 17-201</scope>
</reference>
<reference key="3">
    <citation type="journal article" date="1991" name="Biochem. Biophys. Res. Commun.">
        <title>Identification of the leucine-rich amelogenin peptide (LRAP) as the translation product of an alternatively spliced transcript.</title>
        <authorList>
            <person name="Gibson C.W."/>
            <person name="Golub E."/>
            <person name="Ding W."/>
            <person name="Shimokawa H."/>
            <person name="Young M."/>
            <person name="Termine J."/>
            <person name="Rosenbloom J."/>
        </authorList>
    </citation>
    <scope>ALTERNATIVE SPLICING (ISOFORM 2)</scope>
    <source>
        <tissue>Tooth</tissue>
    </source>
</reference>
<reference key="4">
    <citation type="journal article" date="1993" name="Biochem. Biophys. Res. Commun.">
        <title>Amelogenin post-translational modifications: carboxy-terminal processing and the phosphorylation of bovine and porcine 'TRAP' and 'LRAP' amelogenins.</title>
        <authorList>
            <person name="Fincham A.G."/>
            <person name="Moradian-Oldak J."/>
        </authorList>
    </citation>
    <scope>PROTEIN SEQUENCE OF 17-49 AND 188-213</scope>
    <scope>PHOSPHORYLATION AT SER-32</scope>
</reference>
<reference key="5">
    <citation type="journal article" date="1989" name="Connect. Tissue Res.">
        <title>Secondary structure and limited three-dimensional structure of bovine amelogenin.</title>
        <authorList>
            <person name="Renugopalakrishnan V."/>
            <person name="Prabhakaran M."/>
            <person name="Huang S.G."/>
            <person name="Balasubramaniam A."/>
            <person name="Strawich E."/>
            <person name="Glimcher M.J."/>
        </authorList>
    </citation>
    <scope>STRUCTURE BY NMR</scope>
</reference>
<feature type="signal peptide" evidence="5">
    <location>
        <begin position="1"/>
        <end position="16"/>
    </location>
</feature>
<feature type="chain" id="PRO_0000001196" description="Amelogenin, X isoform">
    <location>
        <begin position="17"/>
        <end position="213"/>
    </location>
</feature>
<feature type="region of interest" description="Disordered" evidence="3">
    <location>
        <begin position="96"/>
        <end position="213"/>
    </location>
</feature>
<feature type="compositionally biased region" description="Low complexity" evidence="3">
    <location>
        <begin position="96"/>
        <end position="105"/>
    </location>
</feature>
<feature type="compositionally biased region" description="Low complexity" evidence="3">
    <location>
        <begin position="114"/>
        <end position="160"/>
    </location>
</feature>
<feature type="compositionally biased region" description="Pro residues" evidence="3">
    <location>
        <begin position="161"/>
        <end position="194"/>
    </location>
</feature>
<feature type="modified residue" description="Phosphoserine" evidence="5">
    <location>
        <position position="32"/>
    </location>
</feature>
<feature type="splice variant" id="VSP_000227" description="In isoform 2." evidence="6">
    <location>
        <begin position="50"/>
        <end position="187"/>
    </location>
</feature>
<sequence length="213" mass="24119">MGTWILFACLLGAAFSMPLPPHPGHPGYINFSYEVLTPLKWYQSMIRHPYPSYGYEPMGGWLHHQIIPVVSQQTPQNHALQPHHHIPMVPAQQPVVPQQPMMPVPGQHSMTPTQHHQPNLPLPAQQPFQPQSIQPQPHQPLQPHQPLQPMQPMQPLQPLQPLQPQPPVHPIQPLPPQPPLPPIFPMQPLPPMLPDLPLEAWPATDKTKREEVD</sequence>
<dbReference type="EMBL" id="M63499">
    <property type="protein sequence ID" value="AAA30372.1"/>
    <property type="molecule type" value="mRNA"/>
</dbReference>
<dbReference type="EMBL" id="M63631">
    <property type="protein sequence ID" value="AAA30625.1"/>
    <property type="molecule type" value="mRNA"/>
</dbReference>
<dbReference type="PIR" id="A37998">
    <property type="entry name" value="JMBO"/>
</dbReference>
<dbReference type="RefSeq" id="NP_001014984.1">
    <molecule id="P02817-1"/>
    <property type="nucleotide sequence ID" value="NM_001014984.1"/>
</dbReference>
<dbReference type="RefSeq" id="XP_015317278.1">
    <property type="nucleotide sequence ID" value="XM_015461792.1"/>
</dbReference>
<dbReference type="FunCoup" id="P02817">
    <property type="interactions" value="8"/>
</dbReference>
<dbReference type="STRING" id="9913.ENSBTAP00000016034"/>
<dbReference type="iPTMnet" id="P02817"/>
<dbReference type="PaxDb" id="9913-ENSBTAP00000016034"/>
<dbReference type="Ensembl" id="ENSBTAT00000016034.6">
    <molecule id="P02817-1"/>
    <property type="protein sequence ID" value="ENSBTAP00000016034.5"/>
    <property type="gene ID" value="ENSBTAG00000012089.7"/>
</dbReference>
<dbReference type="GeneID" id="281620"/>
<dbReference type="KEGG" id="bta:281620"/>
<dbReference type="CTD" id="265"/>
<dbReference type="VEuPathDB" id="HostDB:ENSBTAG00000012089"/>
<dbReference type="eggNOG" id="ENOG502S4XP">
    <property type="taxonomic scope" value="Eukaryota"/>
</dbReference>
<dbReference type="GeneTree" id="ENSGT00390000009151"/>
<dbReference type="InParanoid" id="P02817"/>
<dbReference type="OMA" id="LPIQPYE"/>
<dbReference type="OrthoDB" id="9030267at2759"/>
<dbReference type="TreeFam" id="TF337092"/>
<dbReference type="Reactome" id="R-BTA-381426">
    <property type="pathway name" value="Regulation of Insulin-like Growth Factor (IGF) transport and uptake by Insulin-like Growth Factor Binding Proteins (IGFBPs)"/>
</dbReference>
<dbReference type="Reactome" id="R-BTA-8957275">
    <property type="pathway name" value="Post-translational protein phosphorylation"/>
</dbReference>
<dbReference type="Proteomes" id="UP000009136">
    <property type="component" value="Unassembled WGS sequence"/>
</dbReference>
<dbReference type="Bgee" id="ENSBTAG00000012089">
    <property type="expression patterns" value="Expressed in Ammon's horn and 11 other cell types or tissues"/>
</dbReference>
<dbReference type="GO" id="GO:0062023">
    <property type="term" value="C:collagen-containing extracellular matrix"/>
    <property type="evidence" value="ECO:0000318"/>
    <property type="project" value="GO_Central"/>
</dbReference>
<dbReference type="GO" id="GO:0005576">
    <property type="term" value="C:extracellular region"/>
    <property type="evidence" value="ECO:0007669"/>
    <property type="project" value="UniProtKB-KW"/>
</dbReference>
<dbReference type="GO" id="GO:0030345">
    <property type="term" value="F:structural constituent of tooth enamel"/>
    <property type="evidence" value="ECO:0000318"/>
    <property type="project" value="GO_Central"/>
</dbReference>
<dbReference type="GO" id="GO:0002062">
    <property type="term" value="P:chondrocyte differentiation"/>
    <property type="evidence" value="ECO:0000314"/>
    <property type="project" value="BHF-UCL"/>
</dbReference>
<dbReference type="GO" id="GO:0070166">
    <property type="term" value="P:enamel mineralization"/>
    <property type="evidence" value="ECO:0000318"/>
    <property type="project" value="GO_Central"/>
</dbReference>
<dbReference type="GO" id="GO:0001837">
    <property type="term" value="P:epithelial to mesenchymal transition"/>
    <property type="evidence" value="ECO:0000314"/>
    <property type="project" value="BHF-UCL"/>
</dbReference>
<dbReference type="GO" id="GO:0001649">
    <property type="term" value="P:osteoblast differentiation"/>
    <property type="evidence" value="ECO:0000314"/>
    <property type="project" value="BHF-UCL"/>
</dbReference>
<dbReference type="GO" id="GO:0032967">
    <property type="term" value="P:positive regulation of collagen biosynthetic process"/>
    <property type="evidence" value="ECO:0000314"/>
    <property type="project" value="BHF-UCL"/>
</dbReference>
<dbReference type="InterPro" id="IPR004116">
    <property type="entry name" value="Amelogenin"/>
</dbReference>
<dbReference type="PANTHER" id="PTHR46794:SF2">
    <property type="entry name" value="AMELOGENIN, X ISOFORM"/>
    <property type="match status" value="1"/>
</dbReference>
<dbReference type="PANTHER" id="PTHR46794">
    <property type="entry name" value="AMELOGENIN, Y ISOFORM"/>
    <property type="match status" value="1"/>
</dbReference>
<dbReference type="Pfam" id="PF02948">
    <property type="entry name" value="Amelogenin"/>
    <property type="match status" value="2"/>
</dbReference>
<dbReference type="PRINTS" id="PR01757">
    <property type="entry name" value="AMELOGENIN"/>
</dbReference>
<dbReference type="SMART" id="SM00818">
    <property type="entry name" value="Amelogenin"/>
    <property type="match status" value="1"/>
</dbReference>
<accession>P02817</accession>
<evidence type="ECO:0000250" key="1">
    <source>
        <dbReference type="UniProtKB" id="P63277"/>
    </source>
</evidence>
<evidence type="ECO:0000250" key="2">
    <source>
        <dbReference type="UniProtKB" id="Q99217"/>
    </source>
</evidence>
<evidence type="ECO:0000256" key="3">
    <source>
        <dbReference type="SAM" id="MobiDB-lite"/>
    </source>
</evidence>
<evidence type="ECO:0000269" key="4">
    <source>
    </source>
</evidence>
<evidence type="ECO:0000269" key="5">
    <source>
    </source>
</evidence>
<evidence type="ECO:0000305" key="6"/>
<keyword id="KW-0025">Alternative splicing</keyword>
<keyword id="KW-0091">Biomineralization</keyword>
<keyword id="KW-0903">Direct protein sequencing</keyword>
<keyword id="KW-0272">Extracellular matrix</keyword>
<keyword id="KW-0597">Phosphoprotein</keyword>
<keyword id="KW-1185">Reference proteome</keyword>
<keyword id="KW-0677">Repeat</keyword>
<keyword id="KW-0964">Secreted</keyword>
<keyword id="KW-0732">Signal</keyword>
<name>AMELX_BOVIN</name>
<protein>
    <recommendedName>
        <fullName>Amelogenin, X isoform</fullName>
    </recommendedName>
    <alternativeName>
        <fullName>Class I amelogenin</fullName>
    </alternativeName>
</protein>
<organism>
    <name type="scientific">Bos taurus</name>
    <name type="common">Bovine</name>
    <dbReference type="NCBI Taxonomy" id="9913"/>
    <lineage>
        <taxon>Eukaryota</taxon>
        <taxon>Metazoa</taxon>
        <taxon>Chordata</taxon>
        <taxon>Craniata</taxon>
        <taxon>Vertebrata</taxon>
        <taxon>Euteleostomi</taxon>
        <taxon>Mammalia</taxon>
        <taxon>Eutheria</taxon>
        <taxon>Laurasiatheria</taxon>
        <taxon>Artiodactyla</taxon>
        <taxon>Ruminantia</taxon>
        <taxon>Pecora</taxon>
        <taxon>Bovidae</taxon>
        <taxon>Bovinae</taxon>
        <taxon>Bos</taxon>
    </lineage>
</organism>
<comment type="function">
    <text>Plays a role in the biomineralization of teeth. Seems to regulate the formation of crystallites during the secretory stage of tooth enamel development. Thought to play a major role in the structural organization and mineralization of developing enamel.</text>
</comment>
<comment type="subunit">
    <text evidence="1">Interacts with KRT5.</text>
</comment>
<comment type="subcellular location">
    <subcellularLocation>
        <location evidence="2">Secreted</location>
        <location evidence="2">Extracellular space</location>
        <location evidence="2">Extracellular matrix</location>
    </subcellularLocation>
</comment>
<comment type="alternative products">
    <event type="alternative splicing"/>
    <isoform>
        <id>P02817-1</id>
        <name>1</name>
        <sequence type="displayed"/>
    </isoform>
    <isoform>
        <id>P02817-2</id>
        <name>2</name>
        <name>LRAP</name>
        <sequence type="described" ref="VSP_000227"/>
    </isoform>
    <text>Additional isoforms seem to exist.</text>
</comment>
<comment type="developmental stage">
    <text evidence="4">Transiently but abundantly expressed by ameloblasts during tooth development. Amelogenin is the predominant protein in developing dental enamel.</text>
</comment>
<comment type="PTM">
    <text evidence="2">Phosphorylated by FAM20C in vitro.</text>
</comment>
<comment type="similarity">
    <text evidence="6">Belongs to the amelogenin family.</text>
</comment>
<gene>
    <name type="primary">AMELX</name>
</gene>
<proteinExistence type="evidence at protein level"/>